<proteinExistence type="predicted"/>
<accession>G2TRR6</accession>
<sequence>MTENETLQKSSWKRHFTSTFPNRVKKIFKIKHSSSIPIVRVQPPTPRNSALFTTADFISYTTVYKV</sequence>
<dbReference type="EMBL" id="CU329671">
    <property type="protein sequence ID" value="CCD31376.1"/>
    <property type="molecule type" value="Genomic_DNA"/>
</dbReference>
<dbReference type="RefSeq" id="XP_004001724.1">
    <property type="nucleotide sequence ID" value="XM_004001675.1"/>
</dbReference>
<dbReference type="SMR" id="G2TRR6"/>
<dbReference type="PaxDb" id="4896-SPBC2A9.14.1"/>
<dbReference type="EnsemblFungi" id="SPBC2A9.14.1">
    <property type="protein sequence ID" value="SPBC2A9.14.1:pep"/>
    <property type="gene ID" value="SPBC2A9.14"/>
</dbReference>
<dbReference type="PomBase" id="SPBC2A9.14"/>
<dbReference type="VEuPathDB" id="FungiDB:SPBC2A9.14"/>
<dbReference type="HOGENOM" id="CLU_2832628_0_0_1"/>
<dbReference type="InParanoid" id="G2TRR6"/>
<dbReference type="PRO" id="PR:G2TRR6"/>
<dbReference type="Proteomes" id="UP000002485">
    <property type="component" value="Chromosome II"/>
</dbReference>
<feature type="chain" id="PRO_0000416633" description="Uncharacterized protein C2A9.14">
    <location>
        <begin position="1"/>
        <end position="66"/>
    </location>
</feature>
<reference key="1">
    <citation type="journal article" date="2002" name="Nature">
        <title>The genome sequence of Schizosaccharomyces pombe.</title>
        <authorList>
            <person name="Wood V."/>
            <person name="Gwilliam R."/>
            <person name="Rajandream M.A."/>
            <person name="Lyne M.H."/>
            <person name="Lyne R."/>
            <person name="Stewart A."/>
            <person name="Sgouros J.G."/>
            <person name="Peat N."/>
            <person name="Hayles J."/>
            <person name="Baker S.G."/>
            <person name="Basham D."/>
            <person name="Bowman S."/>
            <person name="Brooks K."/>
            <person name="Brown D."/>
            <person name="Brown S."/>
            <person name="Chillingworth T."/>
            <person name="Churcher C.M."/>
            <person name="Collins M."/>
            <person name="Connor R."/>
            <person name="Cronin A."/>
            <person name="Davis P."/>
            <person name="Feltwell T."/>
            <person name="Fraser A."/>
            <person name="Gentles S."/>
            <person name="Goble A."/>
            <person name="Hamlin N."/>
            <person name="Harris D.E."/>
            <person name="Hidalgo J."/>
            <person name="Hodgson G."/>
            <person name="Holroyd S."/>
            <person name="Hornsby T."/>
            <person name="Howarth S."/>
            <person name="Huckle E.J."/>
            <person name="Hunt S."/>
            <person name="Jagels K."/>
            <person name="James K.D."/>
            <person name="Jones L."/>
            <person name="Jones M."/>
            <person name="Leather S."/>
            <person name="McDonald S."/>
            <person name="McLean J."/>
            <person name="Mooney P."/>
            <person name="Moule S."/>
            <person name="Mungall K.L."/>
            <person name="Murphy L.D."/>
            <person name="Niblett D."/>
            <person name="Odell C."/>
            <person name="Oliver K."/>
            <person name="O'Neil S."/>
            <person name="Pearson D."/>
            <person name="Quail M.A."/>
            <person name="Rabbinowitsch E."/>
            <person name="Rutherford K.M."/>
            <person name="Rutter S."/>
            <person name="Saunders D."/>
            <person name="Seeger K."/>
            <person name="Sharp S."/>
            <person name="Skelton J."/>
            <person name="Simmonds M.N."/>
            <person name="Squares R."/>
            <person name="Squares S."/>
            <person name="Stevens K."/>
            <person name="Taylor K."/>
            <person name="Taylor R.G."/>
            <person name="Tivey A."/>
            <person name="Walsh S.V."/>
            <person name="Warren T."/>
            <person name="Whitehead S."/>
            <person name="Woodward J.R."/>
            <person name="Volckaert G."/>
            <person name="Aert R."/>
            <person name="Robben J."/>
            <person name="Grymonprez B."/>
            <person name="Weltjens I."/>
            <person name="Vanstreels E."/>
            <person name="Rieger M."/>
            <person name="Schaefer M."/>
            <person name="Mueller-Auer S."/>
            <person name="Gabel C."/>
            <person name="Fuchs M."/>
            <person name="Duesterhoeft A."/>
            <person name="Fritzc C."/>
            <person name="Holzer E."/>
            <person name="Moestl D."/>
            <person name="Hilbert H."/>
            <person name="Borzym K."/>
            <person name="Langer I."/>
            <person name="Beck A."/>
            <person name="Lehrach H."/>
            <person name="Reinhardt R."/>
            <person name="Pohl T.M."/>
            <person name="Eger P."/>
            <person name="Zimmermann W."/>
            <person name="Wedler H."/>
            <person name="Wambutt R."/>
            <person name="Purnelle B."/>
            <person name="Goffeau A."/>
            <person name="Cadieu E."/>
            <person name="Dreano S."/>
            <person name="Gloux S."/>
            <person name="Lelaure V."/>
            <person name="Mottier S."/>
            <person name="Galibert F."/>
            <person name="Aves S.J."/>
            <person name="Xiang Z."/>
            <person name="Hunt C."/>
            <person name="Moore K."/>
            <person name="Hurst S.M."/>
            <person name="Lucas M."/>
            <person name="Rochet M."/>
            <person name="Gaillardin C."/>
            <person name="Tallada V.A."/>
            <person name="Garzon A."/>
            <person name="Thode G."/>
            <person name="Daga R.R."/>
            <person name="Cruzado L."/>
            <person name="Jimenez J."/>
            <person name="Sanchez M."/>
            <person name="del Rey F."/>
            <person name="Benito J."/>
            <person name="Dominguez A."/>
            <person name="Revuelta J.L."/>
            <person name="Moreno S."/>
            <person name="Armstrong J."/>
            <person name="Forsburg S.L."/>
            <person name="Cerutti L."/>
            <person name="Lowe T."/>
            <person name="McCombie W.R."/>
            <person name="Paulsen I."/>
            <person name="Potashkin J."/>
            <person name="Shpakovski G.V."/>
            <person name="Ussery D."/>
            <person name="Barrell B.G."/>
            <person name="Nurse P."/>
        </authorList>
    </citation>
    <scope>NUCLEOTIDE SEQUENCE [LARGE SCALE GENOMIC DNA]</scope>
    <source>
        <strain>972 / ATCC 24843</strain>
    </source>
</reference>
<reference key="2">
    <citation type="journal article" date="2011" name="Science">
        <title>Comparative functional genomics of the fission yeasts.</title>
        <authorList>
            <person name="Rhind N."/>
            <person name="Chen Z."/>
            <person name="Yassour M."/>
            <person name="Thompson D.A."/>
            <person name="Haas B.J."/>
            <person name="Habib N."/>
            <person name="Wapinski I."/>
            <person name="Roy S."/>
            <person name="Lin M.F."/>
            <person name="Heiman D.I."/>
            <person name="Young S.K."/>
            <person name="Furuya K."/>
            <person name="Guo Y."/>
            <person name="Pidoux A."/>
            <person name="Chen H.M."/>
            <person name="Robbertse B."/>
            <person name="Goldberg J.M."/>
            <person name="Aoki K."/>
            <person name="Bayne E.H."/>
            <person name="Berlin A.M."/>
            <person name="Desjardins C.A."/>
            <person name="Dobbs E."/>
            <person name="Dukaj L."/>
            <person name="Fan L."/>
            <person name="FitzGerald M.G."/>
            <person name="French C."/>
            <person name="Gujja S."/>
            <person name="Hansen K."/>
            <person name="Keifenheim D."/>
            <person name="Levin J.Z."/>
            <person name="Mosher R.A."/>
            <person name="Mueller C.A."/>
            <person name="Pfiffner J."/>
            <person name="Priest M."/>
            <person name="Russ C."/>
            <person name="Smialowska A."/>
            <person name="Swoboda P."/>
            <person name="Sykes S.M."/>
            <person name="Vaughn M."/>
            <person name="Vengrova S."/>
            <person name="Yoder R."/>
            <person name="Zeng Q."/>
            <person name="Allshire R."/>
            <person name="Baulcombe D."/>
            <person name="Birren B.W."/>
            <person name="Brown W."/>
            <person name="Ekwall K."/>
            <person name="Kellis M."/>
            <person name="Leatherwood J."/>
            <person name="Levin H."/>
            <person name="Margalit H."/>
            <person name="Martienssen R."/>
            <person name="Nieduszynski C.A."/>
            <person name="Spatafora J.W."/>
            <person name="Friedman N."/>
            <person name="Dalgaard J.Z."/>
            <person name="Baumann P."/>
            <person name="Niki H."/>
            <person name="Regev A."/>
            <person name="Nusbaum C."/>
        </authorList>
    </citation>
    <scope>IDENTIFICATION</scope>
</reference>
<organism>
    <name type="scientific">Schizosaccharomyces pombe (strain 972 / ATCC 24843)</name>
    <name type="common">Fission yeast</name>
    <dbReference type="NCBI Taxonomy" id="284812"/>
    <lineage>
        <taxon>Eukaryota</taxon>
        <taxon>Fungi</taxon>
        <taxon>Dikarya</taxon>
        <taxon>Ascomycota</taxon>
        <taxon>Taphrinomycotina</taxon>
        <taxon>Schizosaccharomycetes</taxon>
        <taxon>Schizosaccharomycetales</taxon>
        <taxon>Schizosaccharomycetaceae</taxon>
        <taxon>Schizosaccharomyces</taxon>
    </lineage>
</organism>
<name>YGIE_SCHPO</name>
<keyword id="KW-1185">Reference proteome</keyword>
<protein>
    <recommendedName>
        <fullName>Uncharacterized protein C2A9.14</fullName>
    </recommendedName>
</protein>
<gene>
    <name type="ORF">SPBC2A9.14</name>
</gene>